<keyword id="KW-0413">Isomerase</keyword>
<keyword id="KW-1185">Reference proteome</keyword>
<keyword id="KW-0677">Repeat</keyword>
<dbReference type="EC" id="5.4.99.57"/>
<dbReference type="EMBL" id="Z97338">
    <property type="protein sequence ID" value="CAB10316.1"/>
    <property type="status" value="ALT_SEQ"/>
    <property type="molecule type" value="Genomic_DNA"/>
</dbReference>
<dbReference type="EMBL" id="AL161541">
    <property type="protein sequence ID" value="CAB78579.1"/>
    <property type="status" value="ALT_SEQ"/>
    <property type="molecule type" value="Genomic_DNA"/>
</dbReference>
<dbReference type="EMBL" id="CP002687">
    <property type="protein sequence ID" value="AEE83589.1"/>
    <property type="molecule type" value="Genomic_DNA"/>
</dbReference>
<dbReference type="PIR" id="B71418">
    <property type="entry name" value="B71418"/>
</dbReference>
<dbReference type="RefSeq" id="NP_193272.1">
    <property type="nucleotide sequence ID" value="NM_117625.2"/>
</dbReference>
<dbReference type="SMR" id="O23390"/>
<dbReference type="FunCoup" id="O23390">
    <property type="interactions" value="704"/>
</dbReference>
<dbReference type="STRING" id="3702.O23390"/>
<dbReference type="iPTMnet" id="O23390"/>
<dbReference type="PaxDb" id="3702-AT4G15370.1"/>
<dbReference type="ProteomicsDB" id="240847"/>
<dbReference type="EnsemblPlants" id="AT4G15370.1">
    <property type="protein sequence ID" value="AT4G15370.1"/>
    <property type="gene ID" value="AT4G15370"/>
</dbReference>
<dbReference type="GeneID" id="827203"/>
<dbReference type="Gramene" id="AT4G15370.1">
    <property type="protein sequence ID" value="AT4G15370.1"/>
    <property type="gene ID" value="AT4G15370"/>
</dbReference>
<dbReference type="KEGG" id="ath:AT4G15370"/>
<dbReference type="Araport" id="AT4G15370"/>
<dbReference type="TAIR" id="AT4G15370">
    <property type="gene designation" value="BARS1"/>
</dbReference>
<dbReference type="eggNOG" id="KOG0497">
    <property type="taxonomic scope" value="Eukaryota"/>
</dbReference>
<dbReference type="HOGENOM" id="CLU_009074_2_0_1"/>
<dbReference type="InParanoid" id="O23390"/>
<dbReference type="OMA" id="NMFCTVI"/>
<dbReference type="PhylomeDB" id="O23390"/>
<dbReference type="BioCyc" id="MetaCyc:AT4G15370-MONOMER"/>
<dbReference type="PRO" id="PR:O23390"/>
<dbReference type="Proteomes" id="UP000006548">
    <property type="component" value="Chromosome 4"/>
</dbReference>
<dbReference type="ExpressionAtlas" id="O23390">
    <property type="expression patterns" value="baseline and differential"/>
</dbReference>
<dbReference type="GO" id="GO:0005811">
    <property type="term" value="C:lipid droplet"/>
    <property type="evidence" value="ECO:0007669"/>
    <property type="project" value="InterPro"/>
</dbReference>
<dbReference type="GO" id="GO:0080011">
    <property type="term" value="F:baruol synthase activity"/>
    <property type="evidence" value="ECO:0000314"/>
    <property type="project" value="TAIR"/>
</dbReference>
<dbReference type="GO" id="GO:0010686">
    <property type="term" value="P:tetracyclic triterpenoid biosynthetic process"/>
    <property type="evidence" value="ECO:0000314"/>
    <property type="project" value="TAIR"/>
</dbReference>
<dbReference type="CDD" id="cd02892">
    <property type="entry name" value="SQCY_1"/>
    <property type="match status" value="1"/>
</dbReference>
<dbReference type="FunFam" id="1.50.10.20:FF:000011">
    <property type="entry name" value="Terpene cyclase/mutase family member"/>
    <property type="match status" value="1"/>
</dbReference>
<dbReference type="Gene3D" id="1.50.10.20">
    <property type="match status" value="2"/>
</dbReference>
<dbReference type="InterPro" id="IPR032696">
    <property type="entry name" value="SQ_cyclase_C"/>
</dbReference>
<dbReference type="InterPro" id="IPR032697">
    <property type="entry name" value="SQ_cyclase_N"/>
</dbReference>
<dbReference type="InterPro" id="IPR018333">
    <property type="entry name" value="Squalene_cyclase"/>
</dbReference>
<dbReference type="InterPro" id="IPR002365">
    <property type="entry name" value="Terpene_synthase_CS"/>
</dbReference>
<dbReference type="InterPro" id="IPR008930">
    <property type="entry name" value="Terpenoid_cyclase/PrenylTrfase"/>
</dbReference>
<dbReference type="NCBIfam" id="TIGR01787">
    <property type="entry name" value="squalene_cyclas"/>
    <property type="match status" value="1"/>
</dbReference>
<dbReference type="PANTHER" id="PTHR11764:SF49">
    <property type="entry name" value="ARABIDIOL SYNTHASE-RELATED"/>
    <property type="match status" value="1"/>
</dbReference>
<dbReference type="PANTHER" id="PTHR11764">
    <property type="entry name" value="TERPENE CYCLASE/MUTASE FAMILY MEMBER"/>
    <property type="match status" value="1"/>
</dbReference>
<dbReference type="Pfam" id="PF13243">
    <property type="entry name" value="SQHop_cyclase_C"/>
    <property type="match status" value="1"/>
</dbReference>
<dbReference type="Pfam" id="PF13249">
    <property type="entry name" value="SQHop_cyclase_N"/>
    <property type="match status" value="1"/>
</dbReference>
<dbReference type="SFLD" id="SFLDG01016">
    <property type="entry name" value="Prenyltransferase_Like_2"/>
    <property type="match status" value="1"/>
</dbReference>
<dbReference type="SUPFAM" id="SSF48239">
    <property type="entry name" value="Terpenoid cyclases/Protein prenyltransferases"/>
    <property type="match status" value="2"/>
</dbReference>
<dbReference type="PROSITE" id="PS01074">
    <property type="entry name" value="TERPENE_SYNTHASES"/>
    <property type="match status" value="1"/>
</dbReference>
<organism>
    <name type="scientific">Arabidopsis thaliana</name>
    <name type="common">Mouse-ear cress</name>
    <dbReference type="NCBI Taxonomy" id="3702"/>
    <lineage>
        <taxon>Eukaryota</taxon>
        <taxon>Viridiplantae</taxon>
        <taxon>Streptophyta</taxon>
        <taxon>Embryophyta</taxon>
        <taxon>Tracheophyta</taxon>
        <taxon>Spermatophyta</taxon>
        <taxon>Magnoliopsida</taxon>
        <taxon>eudicotyledons</taxon>
        <taxon>Gunneridae</taxon>
        <taxon>Pentapetalae</taxon>
        <taxon>rosids</taxon>
        <taxon>malvids</taxon>
        <taxon>Brassicales</taxon>
        <taxon>Brassicaceae</taxon>
        <taxon>Camelineae</taxon>
        <taxon>Arabidopsis</taxon>
    </lineage>
</organism>
<feature type="chain" id="PRO_0000366137" description="Baruol synthase">
    <location>
        <begin position="1"/>
        <end position="759"/>
    </location>
</feature>
<feature type="repeat" description="PFTB 1">
    <location>
        <begin position="149"/>
        <end position="190"/>
    </location>
</feature>
<feature type="repeat" description="PFTB 2">
    <location>
        <begin position="522"/>
        <end position="564"/>
    </location>
</feature>
<feature type="repeat" description="PFTB 3">
    <location>
        <begin position="641"/>
        <end position="682"/>
    </location>
</feature>
<feature type="active site" description="Proton donor" evidence="1">
    <location>
        <position position="493"/>
    </location>
</feature>
<sequence>MWRLRIGAKAKDNTHLFTTNNYVGRQIWEFDANAGSPEELAEVEEARRNFSNNRSRFKASADLLWRMQFLREKKFEQKIPRVIVEDAEKITYEDAKTALRRGLLYFTALQADDGHWPAENAGSIFFNAPFVICLYITGHLEKIFTHEHRVELLRYMYNHQNEDGGWGLHVESPSNMFCSVINYICLRILGVEAGHDDKGSACARARKWILDHGGATYSPLIGKAWLSVLGVYDWSGCKPIPPEFWFLPSFFPVNGGTLWIYLRDIFMGLSYLYGKNFVATSTPLILQLREEIYPEPYTNISWRQARNRCAKEDLYYPQSFLQDLFWKGVHVFSENILNRWPFNNLIRQRALRTTMELVHYHDEATRYITGGSVPKVIAVFHMLACWVEDPESDYFKKHLARVPDFIWIGEDGLKIQSFGSQVWDTALSLHVFIDGFDDDVDEEIRSTLLKGYDYLEKSQVTENPPGDYMKMFRHMAKGGWTFSDQDQGWPVSDCTAESLECCLFFESMSSEFIGKKMDVEKLYDAVDFLLYLQSDNGGITAWQPADGKLVEFIEDAVVEHEYVECTGSAIVALAQFNKQFPGYKKEEVERFITKGVKYIEDLQMVDGSWYGNWGVCFIYGTFFAVRGLVAAGKCYNNCEAIRRAVRFILDTQNTEGGWGESYLSCPRKKYIPLIGNKTNVVNTGQALMVLIMGNQMKRDPLPVHRAAKVLINSQMDNGDFPQQEIMGVFKMNVMLHFPTYRNMFTLWALTHYTKALRGL</sequence>
<accession>O23390</accession>
<reference key="1">
    <citation type="journal article" date="1998" name="Nature">
        <title>Analysis of 1.9 Mb of contiguous sequence from chromosome 4 of Arabidopsis thaliana.</title>
        <authorList>
            <person name="Bevan M."/>
            <person name="Bancroft I."/>
            <person name="Bent E."/>
            <person name="Love K."/>
            <person name="Goodman H.M."/>
            <person name="Dean C."/>
            <person name="Bergkamp R."/>
            <person name="Dirkse W."/>
            <person name="van Staveren M."/>
            <person name="Stiekema W."/>
            <person name="Drost L."/>
            <person name="Ridley P."/>
            <person name="Hudson S.-A."/>
            <person name="Patel K."/>
            <person name="Murphy G."/>
            <person name="Piffanelli P."/>
            <person name="Wedler H."/>
            <person name="Wedler E."/>
            <person name="Wambutt R."/>
            <person name="Weitzenegger T."/>
            <person name="Pohl T."/>
            <person name="Terryn N."/>
            <person name="Gielen J."/>
            <person name="Villarroel R."/>
            <person name="De Clercq R."/>
            <person name="van Montagu M."/>
            <person name="Lecharny A."/>
            <person name="Aubourg S."/>
            <person name="Gy I."/>
            <person name="Kreis M."/>
            <person name="Lao N."/>
            <person name="Kavanagh T."/>
            <person name="Hempel S."/>
            <person name="Kotter P."/>
            <person name="Entian K.-D."/>
            <person name="Rieger M."/>
            <person name="Schaefer M."/>
            <person name="Funk B."/>
            <person name="Mueller-Auer S."/>
            <person name="Silvey M."/>
            <person name="James R."/>
            <person name="Monfort A."/>
            <person name="Pons A."/>
            <person name="Puigdomenech P."/>
            <person name="Douka A."/>
            <person name="Voukelatou E."/>
            <person name="Milioni D."/>
            <person name="Hatzopoulos P."/>
            <person name="Piravandi E."/>
            <person name="Obermaier B."/>
            <person name="Hilbert H."/>
            <person name="Duesterhoeft A."/>
            <person name="Moores T."/>
            <person name="Jones J.D.G."/>
            <person name="Eneva T."/>
            <person name="Palme K."/>
            <person name="Benes V."/>
            <person name="Rechmann S."/>
            <person name="Ansorge W."/>
            <person name="Cooke R."/>
            <person name="Berger C."/>
            <person name="Delseny M."/>
            <person name="Voet M."/>
            <person name="Volckaert G."/>
            <person name="Mewes H.-W."/>
            <person name="Klosterman S."/>
            <person name="Schueller C."/>
            <person name="Chalwatzis N."/>
        </authorList>
    </citation>
    <scope>NUCLEOTIDE SEQUENCE [LARGE SCALE GENOMIC DNA]</scope>
    <source>
        <strain>cv. Columbia</strain>
    </source>
</reference>
<reference key="2">
    <citation type="journal article" date="1999" name="Nature">
        <title>Sequence and analysis of chromosome 4 of the plant Arabidopsis thaliana.</title>
        <authorList>
            <person name="Mayer K.F.X."/>
            <person name="Schueller C."/>
            <person name="Wambutt R."/>
            <person name="Murphy G."/>
            <person name="Volckaert G."/>
            <person name="Pohl T."/>
            <person name="Duesterhoeft A."/>
            <person name="Stiekema W."/>
            <person name="Entian K.-D."/>
            <person name="Terryn N."/>
            <person name="Harris B."/>
            <person name="Ansorge W."/>
            <person name="Brandt P."/>
            <person name="Grivell L.A."/>
            <person name="Rieger M."/>
            <person name="Weichselgartner M."/>
            <person name="de Simone V."/>
            <person name="Obermaier B."/>
            <person name="Mache R."/>
            <person name="Mueller M."/>
            <person name="Kreis M."/>
            <person name="Delseny M."/>
            <person name="Puigdomenech P."/>
            <person name="Watson M."/>
            <person name="Schmidtheini T."/>
            <person name="Reichert B."/>
            <person name="Portetelle D."/>
            <person name="Perez-Alonso M."/>
            <person name="Boutry M."/>
            <person name="Bancroft I."/>
            <person name="Vos P."/>
            <person name="Hoheisel J."/>
            <person name="Zimmermann W."/>
            <person name="Wedler H."/>
            <person name="Ridley P."/>
            <person name="Langham S.-A."/>
            <person name="McCullagh B."/>
            <person name="Bilham L."/>
            <person name="Robben J."/>
            <person name="van der Schueren J."/>
            <person name="Grymonprez B."/>
            <person name="Chuang Y.-J."/>
            <person name="Vandenbussche F."/>
            <person name="Braeken M."/>
            <person name="Weltjens I."/>
            <person name="Voet M."/>
            <person name="Bastiaens I."/>
            <person name="Aert R."/>
            <person name="Defoor E."/>
            <person name="Weitzenegger T."/>
            <person name="Bothe G."/>
            <person name="Ramsperger U."/>
            <person name="Hilbert H."/>
            <person name="Braun M."/>
            <person name="Holzer E."/>
            <person name="Brandt A."/>
            <person name="Peters S."/>
            <person name="van Staveren M."/>
            <person name="Dirkse W."/>
            <person name="Mooijman P."/>
            <person name="Klein Lankhorst R."/>
            <person name="Rose M."/>
            <person name="Hauf J."/>
            <person name="Koetter P."/>
            <person name="Berneiser S."/>
            <person name="Hempel S."/>
            <person name="Feldpausch M."/>
            <person name="Lamberth S."/>
            <person name="Van den Daele H."/>
            <person name="De Keyser A."/>
            <person name="Buysshaert C."/>
            <person name="Gielen J."/>
            <person name="Villarroel R."/>
            <person name="De Clercq R."/>
            <person name="van Montagu M."/>
            <person name="Rogers J."/>
            <person name="Cronin A."/>
            <person name="Quail M.A."/>
            <person name="Bray-Allen S."/>
            <person name="Clark L."/>
            <person name="Doggett J."/>
            <person name="Hall S."/>
            <person name="Kay M."/>
            <person name="Lennard N."/>
            <person name="McLay K."/>
            <person name="Mayes R."/>
            <person name="Pettett A."/>
            <person name="Rajandream M.A."/>
            <person name="Lyne M."/>
            <person name="Benes V."/>
            <person name="Rechmann S."/>
            <person name="Borkova D."/>
            <person name="Bloecker H."/>
            <person name="Scharfe M."/>
            <person name="Grimm M."/>
            <person name="Loehnert T.-H."/>
            <person name="Dose S."/>
            <person name="de Haan M."/>
            <person name="Maarse A.C."/>
            <person name="Schaefer M."/>
            <person name="Mueller-Auer S."/>
            <person name="Gabel C."/>
            <person name="Fuchs M."/>
            <person name="Fartmann B."/>
            <person name="Granderath K."/>
            <person name="Dauner D."/>
            <person name="Herzl A."/>
            <person name="Neumann S."/>
            <person name="Argiriou A."/>
            <person name="Vitale D."/>
            <person name="Liguori R."/>
            <person name="Piravandi E."/>
            <person name="Massenet O."/>
            <person name="Quigley F."/>
            <person name="Clabauld G."/>
            <person name="Muendlein A."/>
            <person name="Felber R."/>
            <person name="Schnabl S."/>
            <person name="Hiller R."/>
            <person name="Schmidt W."/>
            <person name="Lecharny A."/>
            <person name="Aubourg S."/>
            <person name="Chefdor F."/>
            <person name="Cooke R."/>
            <person name="Berger C."/>
            <person name="Monfort A."/>
            <person name="Casacuberta E."/>
            <person name="Gibbons T."/>
            <person name="Weber N."/>
            <person name="Vandenbol M."/>
            <person name="Bargues M."/>
            <person name="Terol J."/>
            <person name="Torres A."/>
            <person name="Perez-Perez A."/>
            <person name="Purnelle B."/>
            <person name="Bent E."/>
            <person name="Johnson S."/>
            <person name="Tacon D."/>
            <person name="Jesse T."/>
            <person name="Heijnen L."/>
            <person name="Schwarz S."/>
            <person name="Scholler P."/>
            <person name="Heber S."/>
            <person name="Francs P."/>
            <person name="Bielke C."/>
            <person name="Frishman D."/>
            <person name="Haase D."/>
            <person name="Lemcke K."/>
            <person name="Mewes H.-W."/>
            <person name="Stocker S."/>
            <person name="Zaccaria P."/>
            <person name="Bevan M."/>
            <person name="Wilson R.K."/>
            <person name="de la Bastide M."/>
            <person name="Habermann K."/>
            <person name="Parnell L."/>
            <person name="Dedhia N."/>
            <person name="Gnoj L."/>
            <person name="Schutz K."/>
            <person name="Huang E."/>
            <person name="Spiegel L."/>
            <person name="Sekhon M."/>
            <person name="Murray J."/>
            <person name="Sheet P."/>
            <person name="Cordes M."/>
            <person name="Abu-Threideh J."/>
            <person name="Stoneking T."/>
            <person name="Kalicki J."/>
            <person name="Graves T."/>
            <person name="Harmon G."/>
            <person name="Edwards J."/>
            <person name="Latreille P."/>
            <person name="Courtney L."/>
            <person name="Cloud J."/>
            <person name="Abbott A."/>
            <person name="Scott K."/>
            <person name="Johnson D."/>
            <person name="Minx P."/>
            <person name="Bentley D."/>
            <person name="Fulton B."/>
            <person name="Miller N."/>
            <person name="Greco T."/>
            <person name="Kemp K."/>
            <person name="Kramer J."/>
            <person name="Fulton L."/>
            <person name="Mardis E."/>
            <person name="Dante M."/>
            <person name="Pepin K."/>
            <person name="Hillier L.W."/>
            <person name="Nelson J."/>
            <person name="Spieth J."/>
            <person name="Ryan E."/>
            <person name="Andrews S."/>
            <person name="Geisel C."/>
            <person name="Layman D."/>
            <person name="Du H."/>
            <person name="Ali J."/>
            <person name="Berghoff A."/>
            <person name="Jones K."/>
            <person name="Drone K."/>
            <person name="Cotton M."/>
            <person name="Joshu C."/>
            <person name="Antonoiu B."/>
            <person name="Zidanic M."/>
            <person name="Strong C."/>
            <person name="Sun H."/>
            <person name="Lamar B."/>
            <person name="Yordan C."/>
            <person name="Ma P."/>
            <person name="Zhong J."/>
            <person name="Preston R."/>
            <person name="Vil D."/>
            <person name="Shekher M."/>
            <person name="Matero A."/>
            <person name="Shah R."/>
            <person name="Swaby I.K."/>
            <person name="O'Shaughnessy A."/>
            <person name="Rodriguez M."/>
            <person name="Hoffman J."/>
            <person name="Till S."/>
            <person name="Granat S."/>
            <person name="Shohdy N."/>
            <person name="Hasegawa A."/>
            <person name="Hameed A."/>
            <person name="Lodhi M."/>
            <person name="Johnson A."/>
            <person name="Chen E."/>
            <person name="Marra M.A."/>
            <person name="Martienssen R."/>
            <person name="McCombie W.R."/>
        </authorList>
    </citation>
    <scope>NUCLEOTIDE SEQUENCE [LARGE SCALE GENOMIC DNA]</scope>
    <source>
        <strain>cv. Columbia</strain>
    </source>
</reference>
<reference key="3">
    <citation type="journal article" date="2017" name="Plant J.">
        <title>Araport11: a complete reannotation of the Arabidopsis thaliana reference genome.</title>
        <authorList>
            <person name="Cheng C.Y."/>
            <person name="Krishnakumar V."/>
            <person name="Chan A.P."/>
            <person name="Thibaud-Nissen F."/>
            <person name="Schobel S."/>
            <person name="Town C.D."/>
        </authorList>
    </citation>
    <scope>GENOME REANNOTATION</scope>
    <source>
        <strain>cv. Columbia</strain>
    </source>
</reference>
<reference key="4">
    <citation type="journal article" date="2001" name="Plant Mol. Biol.">
        <title>Molecular cloning and expression in yeast of 2,3-oxidosqualene-triterpenoid cyclases from Arabidopsis thaliana.</title>
        <authorList>
            <person name="Husselstein-Muller T."/>
            <person name="Schaller H."/>
            <person name="Benveniste P."/>
        </authorList>
    </citation>
    <scope>IDENTIFICATION</scope>
    <scope>NOMENCLATURE</scope>
</reference>
<reference key="5">
    <citation type="journal article" date="2007" name="J. Am. Chem. Soc.">
        <title>An oxidosqualene cyclase makes numerous products by diverse mechanisms: a challenge to prevailing concepts of triterpene biosynthesis.</title>
        <authorList>
            <person name="Lodeiro S."/>
            <person name="Xiong Q."/>
            <person name="Wilson W.K."/>
            <person name="Kolesnikova M.D."/>
            <person name="Onak C.S."/>
            <person name="Matsuda S.P.T."/>
        </authorList>
    </citation>
    <scope>FUNCTION</scope>
    <scope>CATALYTIC ACTIVITY</scope>
</reference>
<proteinExistence type="evidence at protein level"/>
<evidence type="ECO:0000250" key="1">
    <source>
        <dbReference type="UniProtKB" id="P48449"/>
    </source>
</evidence>
<evidence type="ECO:0000269" key="2">
    <source>
    </source>
</evidence>
<evidence type="ECO:0000305" key="3"/>
<gene>
    <name type="primary">BARS1</name>
    <name type="synonym">PEN2</name>
    <name type="ordered locus">At4g15370</name>
    <name type="ORF">dl3730c</name>
    <name type="ORF">FCAALL.279</name>
</gene>
<protein>
    <recommendedName>
        <fullName>Baruol synthase</fullName>
        <shortName>AtBARS1</shortName>
        <ecNumber>5.4.99.57</ecNumber>
    </recommendedName>
    <alternativeName>
        <fullName>Pentacyclic triterpene synthase 2</fullName>
        <shortName>AtPEN2</shortName>
    </alternativeName>
</protein>
<comment type="function">
    <text evidence="2">Converts oxidosqualene to baruol (90%) and 22 minor products.</text>
</comment>
<comment type="catalytic activity">
    <reaction evidence="2">
        <text>(S)-2,3-epoxysqualene = baruol</text>
        <dbReference type="Rhea" id="RHEA:31987"/>
        <dbReference type="ChEBI" id="CHEBI:15441"/>
        <dbReference type="ChEBI" id="CHEBI:63712"/>
        <dbReference type="EC" id="5.4.99.57"/>
    </reaction>
</comment>
<comment type="similarity">
    <text evidence="3">Belongs to the terpene cyclase/mutase family.</text>
</comment>
<comment type="sequence caution" evidence="3">
    <conflict type="erroneous gene model prediction">
        <sequence resource="EMBL-CDS" id="CAB10316"/>
    </conflict>
</comment>
<comment type="sequence caution" evidence="3">
    <conflict type="erroneous gene model prediction">
        <sequence resource="EMBL-CDS" id="CAB78579"/>
    </conflict>
</comment>
<name>BARS1_ARATH</name>